<reference key="1">
    <citation type="submission" date="2008-06" db="EMBL/GenBank/DDBJ databases">
        <title>Complete sequence of Stenotrophomonas maltophilia R551-3.</title>
        <authorList>
            <consortium name="US DOE Joint Genome Institute"/>
            <person name="Lucas S."/>
            <person name="Copeland A."/>
            <person name="Lapidus A."/>
            <person name="Glavina del Rio T."/>
            <person name="Dalin E."/>
            <person name="Tice H."/>
            <person name="Pitluck S."/>
            <person name="Chain P."/>
            <person name="Malfatti S."/>
            <person name="Shin M."/>
            <person name="Vergez L."/>
            <person name="Lang D."/>
            <person name="Schmutz J."/>
            <person name="Larimer F."/>
            <person name="Land M."/>
            <person name="Hauser L."/>
            <person name="Kyrpides N."/>
            <person name="Mikhailova N."/>
            <person name="Taghavi S."/>
            <person name="Monchy S."/>
            <person name="Newman L."/>
            <person name="Vangronsveld J."/>
            <person name="van der Lelie D."/>
            <person name="Richardson P."/>
        </authorList>
    </citation>
    <scope>NUCLEOTIDE SEQUENCE [LARGE SCALE GENOMIC DNA]</scope>
    <source>
        <strain>R551-3</strain>
    </source>
</reference>
<evidence type="ECO:0000255" key="1">
    <source>
        <dbReference type="HAMAP-Rule" id="MF_00368"/>
    </source>
</evidence>
<evidence type="ECO:0000305" key="2"/>
<dbReference type="EMBL" id="CP001111">
    <property type="protein sequence ID" value="ACF50453.1"/>
    <property type="molecule type" value="Genomic_DNA"/>
</dbReference>
<dbReference type="RefSeq" id="WP_004145253.1">
    <property type="nucleotide sequence ID" value="NC_011071.1"/>
</dbReference>
<dbReference type="SMR" id="B4SKV5"/>
<dbReference type="STRING" id="391008.Smal_0748"/>
<dbReference type="KEGG" id="smt:Smal_0748"/>
<dbReference type="eggNOG" id="COG0222">
    <property type="taxonomic scope" value="Bacteria"/>
</dbReference>
<dbReference type="HOGENOM" id="CLU_086499_3_0_6"/>
<dbReference type="OrthoDB" id="9811748at2"/>
<dbReference type="Proteomes" id="UP000001867">
    <property type="component" value="Chromosome"/>
</dbReference>
<dbReference type="GO" id="GO:0022625">
    <property type="term" value="C:cytosolic large ribosomal subunit"/>
    <property type="evidence" value="ECO:0007669"/>
    <property type="project" value="TreeGrafter"/>
</dbReference>
<dbReference type="GO" id="GO:0003729">
    <property type="term" value="F:mRNA binding"/>
    <property type="evidence" value="ECO:0007669"/>
    <property type="project" value="TreeGrafter"/>
</dbReference>
<dbReference type="GO" id="GO:0003735">
    <property type="term" value="F:structural constituent of ribosome"/>
    <property type="evidence" value="ECO:0007669"/>
    <property type="project" value="InterPro"/>
</dbReference>
<dbReference type="GO" id="GO:0006412">
    <property type="term" value="P:translation"/>
    <property type="evidence" value="ECO:0007669"/>
    <property type="project" value="UniProtKB-UniRule"/>
</dbReference>
<dbReference type="CDD" id="cd00387">
    <property type="entry name" value="Ribosomal_L7_L12"/>
    <property type="match status" value="1"/>
</dbReference>
<dbReference type="FunFam" id="1.20.5.710:FF:000003">
    <property type="entry name" value="50S ribosomal protein L7/L12"/>
    <property type="match status" value="1"/>
</dbReference>
<dbReference type="FunFam" id="3.30.1390.10:FF:000001">
    <property type="entry name" value="50S ribosomal protein L7/L12"/>
    <property type="match status" value="1"/>
</dbReference>
<dbReference type="Gene3D" id="3.30.1390.10">
    <property type="match status" value="1"/>
</dbReference>
<dbReference type="Gene3D" id="1.20.5.710">
    <property type="entry name" value="Single helix bin"/>
    <property type="match status" value="1"/>
</dbReference>
<dbReference type="HAMAP" id="MF_00368">
    <property type="entry name" value="Ribosomal_bL12"/>
    <property type="match status" value="1"/>
</dbReference>
<dbReference type="InterPro" id="IPR000206">
    <property type="entry name" value="Ribosomal_bL12"/>
</dbReference>
<dbReference type="InterPro" id="IPR013823">
    <property type="entry name" value="Ribosomal_bL12_C"/>
</dbReference>
<dbReference type="InterPro" id="IPR014719">
    <property type="entry name" value="Ribosomal_bL12_C/ClpS-like"/>
</dbReference>
<dbReference type="InterPro" id="IPR008932">
    <property type="entry name" value="Ribosomal_bL12_oligo"/>
</dbReference>
<dbReference type="InterPro" id="IPR036235">
    <property type="entry name" value="Ribosomal_bL12_oligo_N_sf"/>
</dbReference>
<dbReference type="NCBIfam" id="TIGR00855">
    <property type="entry name" value="L12"/>
    <property type="match status" value="1"/>
</dbReference>
<dbReference type="PANTHER" id="PTHR45987">
    <property type="entry name" value="39S RIBOSOMAL PROTEIN L12"/>
    <property type="match status" value="1"/>
</dbReference>
<dbReference type="PANTHER" id="PTHR45987:SF4">
    <property type="entry name" value="LARGE RIBOSOMAL SUBUNIT PROTEIN BL12M"/>
    <property type="match status" value="1"/>
</dbReference>
<dbReference type="Pfam" id="PF00542">
    <property type="entry name" value="Ribosomal_L12"/>
    <property type="match status" value="1"/>
</dbReference>
<dbReference type="Pfam" id="PF16320">
    <property type="entry name" value="Ribosomal_L12_N"/>
    <property type="match status" value="1"/>
</dbReference>
<dbReference type="SUPFAM" id="SSF54736">
    <property type="entry name" value="ClpS-like"/>
    <property type="match status" value="1"/>
</dbReference>
<dbReference type="SUPFAM" id="SSF48300">
    <property type="entry name" value="Ribosomal protein L7/12, oligomerisation (N-terminal) domain"/>
    <property type="match status" value="1"/>
</dbReference>
<gene>
    <name evidence="1" type="primary">rplL</name>
    <name type="ordered locus">Smal_0748</name>
</gene>
<feature type="chain" id="PRO_1000121492" description="Large ribosomal subunit protein bL12">
    <location>
        <begin position="1"/>
        <end position="122"/>
    </location>
</feature>
<proteinExistence type="inferred from homology"/>
<protein>
    <recommendedName>
        <fullName evidence="1">Large ribosomal subunit protein bL12</fullName>
    </recommendedName>
    <alternativeName>
        <fullName evidence="2">50S ribosomal protein L7/L12</fullName>
    </alternativeName>
</protein>
<accession>B4SKV5</accession>
<keyword id="KW-0687">Ribonucleoprotein</keyword>
<keyword id="KW-0689">Ribosomal protein</keyword>
<sequence>MSLTNEQIVDAIAEKSLMEVMELVKAIEEKFGVSAAAPVAVAAAAGPAAAVEEQTEFTVTLKSAGDKKVEVIKAVRAITGLGLKEAKDLAEAGGVLKDAASKDEAEKMKKDLEAAGATVEVK</sequence>
<name>RL7_STRM5</name>
<organism>
    <name type="scientific">Stenotrophomonas maltophilia (strain R551-3)</name>
    <dbReference type="NCBI Taxonomy" id="391008"/>
    <lineage>
        <taxon>Bacteria</taxon>
        <taxon>Pseudomonadati</taxon>
        <taxon>Pseudomonadota</taxon>
        <taxon>Gammaproteobacteria</taxon>
        <taxon>Lysobacterales</taxon>
        <taxon>Lysobacteraceae</taxon>
        <taxon>Stenotrophomonas</taxon>
        <taxon>Stenotrophomonas maltophilia group</taxon>
    </lineage>
</organism>
<comment type="function">
    <text evidence="1">Forms part of the ribosomal stalk which helps the ribosome interact with GTP-bound translation factors. Is thus essential for accurate translation.</text>
</comment>
<comment type="subunit">
    <text evidence="1">Homodimer. Part of the ribosomal stalk of the 50S ribosomal subunit. Forms a multimeric L10(L12)X complex, where L10 forms an elongated spine to which 2 to 4 L12 dimers bind in a sequential fashion. Binds GTP-bound translation factors.</text>
</comment>
<comment type="similarity">
    <text evidence="1">Belongs to the bacterial ribosomal protein bL12 family.</text>
</comment>